<name>RL24_CHLTR</name>
<accession>P0CD86</accession>
<accession>O84523</accession>
<accession>P28537</accession>
<gene>
    <name evidence="1" type="primary">rplX</name>
    <name type="synonym">rl24</name>
    <name type="ordered locus">CT_517</name>
</gene>
<dbReference type="EMBL" id="AE001273">
    <property type="protein sequence ID" value="AAC68118.1"/>
    <property type="molecule type" value="Genomic_DNA"/>
</dbReference>
<dbReference type="RefSeq" id="NP_220032.1">
    <property type="nucleotide sequence ID" value="NC_000117.1"/>
</dbReference>
<dbReference type="RefSeq" id="WP_009871881.1">
    <property type="nucleotide sequence ID" value="NC_000117.1"/>
</dbReference>
<dbReference type="SMR" id="P0CD86"/>
<dbReference type="FunCoup" id="P0CD86">
    <property type="interactions" value="268"/>
</dbReference>
<dbReference type="STRING" id="272561.CT_517"/>
<dbReference type="EnsemblBacteria" id="AAC68118">
    <property type="protein sequence ID" value="AAC68118"/>
    <property type="gene ID" value="CT_517"/>
</dbReference>
<dbReference type="GeneID" id="884294"/>
<dbReference type="KEGG" id="ctr:CT_517"/>
<dbReference type="PATRIC" id="fig|272561.5.peg.561"/>
<dbReference type="HOGENOM" id="CLU_093315_2_0_0"/>
<dbReference type="InParanoid" id="P0CD86"/>
<dbReference type="OrthoDB" id="9807419at2"/>
<dbReference type="Proteomes" id="UP000000431">
    <property type="component" value="Chromosome"/>
</dbReference>
<dbReference type="GO" id="GO:0022625">
    <property type="term" value="C:cytosolic large ribosomal subunit"/>
    <property type="evidence" value="ECO:0000318"/>
    <property type="project" value="GO_Central"/>
</dbReference>
<dbReference type="GO" id="GO:0019843">
    <property type="term" value="F:rRNA binding"/>
    <property type="evidence" value="ECO:0007669"/>
    <property type="project" value="UniProtKB-UniRule"/>
</dbReference>
<dbReference type="GO" id="GO:0003735">
    <property type="term" value="F:structural constituent of ribosome"/>
    <property type="evidence" value="ECO:0007669"/>
    <property type="project" value="InterPro"/>
</dbReference>
<dbReference type="GO" id="GO:0006412">
    <property type="term" value="P:translation"/>
    <property type="evidence" value="ECO:0000318"/>
    <property type="project" value="GO_Central"/>
</dbReference>
<dbReference type="CDD" id="cd06089">
    <property type="entry name" value="KOW_RPL26"/>
    <property type="match status" value="1"/>
</dbReference>
<dbReference type="Gene3D" id="2.30.30.30">
    <property type="match status" value="1"/>
</dbReference>
<dbReference type="HAMAP" id="MF_01326_B">
    <property type="entry name" value="Ribosomal_uL24_B"/>
    <property type="match status" value="1"/>
</dbReference>
<dbReference type="InterPro" id="IPR005824">
    <property type="entry name" value="KOW"/>
</dbReference>
<dbReference type="InterPro" id="IPR014722">
    <property type="entry name" value="Rib_uL2_dom2"/>
</dbReference>
<dbReference type="InterPro" id="IPR003256">
    <property type="entry name" value="Ribosomal_uL24"/>
</dbReference>
<dbReference type="InterPro" id="IPR005825">
    <property type="entry name" value="Ribosomal_uL24_CS"/>
</dbReference>
<dbReference type="InterPro" id="IPR041988">
    <property type="entry name" value="Ribosomal_uL24_KOW"/>
</dbReference>
<dbReference type="InterPro" id="IPR008991">
    <property type="entry name" value="Translation_prot_SH3-like_sf"/>
</dbReference>
<dbReference type="NCBIfam" id="TIGR01079">
    <property type="entry name" value="rplX_bact"/>
    <property type="match status" value="1"/>
</dbReference>
<dbReference type="PANTHER" id="PTHR12903">
    <property type="entry name" value="MITOCHONDRIAL RIBOSOMAL PROTEIN L24"/>
    <property type="match status" value="1"/>
</dbReference>
<dbReference type="Pfam" id="PF00467">
    <property type="entry name" value="KOW"/>
    <property type="match status" value="1"/>
</dbReference>
<dbReference type="Pfam" id="PF17136">
    <property type="entry name" value="ribosomal_L24"/>
    <property type="match status" value="1"/>
</dbReference>
<dbReference type="SMART" id="SM00739">
    <property type="entry name" value="KOW"/>
    <property type="match status" value="1"/>
</dbReference>
<dbReference type="SUPFAM" id="SSF50104">
    <property type="entry name" value="Translation proteins SH3-like domain"/>
    <property type="match status" value="1"/>
</dbReference>
<dbReference type="PROSITE" id="PS01108">
    <property type="entry name" value="RIBOSOMAL_L24"/>
    <property type="match status" value="1"/>
</dbReference>
<evidence type="ECO:0000255" key="1">
    <source>
        <dbReference type="HAMAP-Rule" id="MF_01326"/>
    </source>
</evidence>
<evidence type="ECO:0000305" key="2"/>
<feature type="chain" id="PRO_0000130644" description="Large ribosomal subunit protein uL24">
    <location>
        <begin position="1"/>
        <end position="111"/>
    </location>
</feature>
<proteinExistence type="inferred from homology"/>
<keyword id="KW-1185">Reference proteome</keyword>
<keyword id="KW-0687">Ribonucleoprotein</keyword>
<keyword id="KW-0689">Ribosomal protein</keyword>
<keyword id="KW-0694">RNA-binding</keyword>
<keyword id="KW-0699">rRNA-binding</keyword>
<organism>
    <name type="scientific">Chlamydia trachomatis serovar D (strain ATCC VR-885 / DSM 19411 / UW-3/Cx)</name>
    <dbReference type="NCBI Taxonomy" id="272561"/>
    <lineage>
        <taxon>Bacteria</taxon>
        <taxon>Pseudomonadati</taxon>
        <taxon>Chlamydiota</taxon>
        <taxon>Chlamydiia</taxon>
        <taxon>Chlamydiales</taxon>
        <taxon>Chlamydiaceae</taxon>
        <taxon>Chlamydia/Chlamydophila group</taxon>
        <taxon>Chlamydia</taxon>
    </lineage>
</organism>
<reference key="1">
    <citation type="journal article" date="1998" name="Science">
        <title>Genome sequence of an obligate intracellular pathogen of humans: Chlamydia trachomatis.</title>
        <authorList>
            <person name="Stephens R.S."/>
            <person name="Kalman S."/>
            <person name="Lammel C.J."/>
            <person name="Fan J."/>
            <person name="Marathe R."/>
            <person name="Aravind L."/>
            <person name="Mitchell W.P."/>
            <person name="Olinger L."/>
            <person name="Tatusov R.L."/>
            <person name="Zhao Q."/>
            <person name="Koonin E.V."/>
            <person name="Davis R.W."/>
        </authorList>
    </citation>
    <scope>NUCLEOTIDE SEQUENCE [LARGE SCALE GENOMIC DNA]</scope>
    <source>
        <strain>ATCC VR-885 / DSM 19411 / UW-3/Cx</strain>
    </source>
</reference>
<comment type="function">
    <text evidence="1">One of two assembly initiator proteins, it binds directly to the 5'-end of the 23S rRNA, where it nucleates assembly of the 50S subunit.</text>
</comment>
<comment type="function">
    <text evidence="1">One of the proteins that surrounds the polypeptide exit tunnel on the outside of the subunit.</text>
</comment>
<comment type="subunit">
    <text evidence="1">Part of the 50S ribosomal subunit.</text>
</comment>
<comment type="similarity">
    <text evidence="1">Belongs to the universal ribosomal protein uL24 family.</text>
</comment>
<sequence length="111" mass="12637">MKRRSVCVGDTVYVLAGNDKGKQGKVLRCLKDKVVVEGINVRVKNIKRSQENPKGKRINIEAPLHISNVRLSIDNQPARLFVKVREKGRELWNKHSDGSSSLYRSVRERKG</sequence>
<protein>
    <recommendedName>
        <fullName evidence="1">Large ribosomal subunit protein uL24</fullName>
    </recommendedName>
    <alternativeName>
        <fullName evidence="2">50S ribosomal protein L24</fullName>
    </alternativeName>
</protein>